<sequence length="503" mass="55138">MSIKAEEISALIKQQLEKYDDKLNVNEVGTVTYVGDGIARAHGLNNVLSSELLQFSNGSYGIAQNLEANDVGIIILGRFDDIREGDQVKRTGRIMEVPVGDQLIGRVVNPLGQPVDGLGEIKTDKTRPIESKAPGVMDRQSVNQPLQTGIKAIDALVPIGRGQRELIIGDRKTGKTALALDTIINQKGQDVICIYVAIGQKESTVKNSVETLKRFGAMDYTIVVEAGPSEPAPMLYIAPYAGTAMGEEFMYNGKDVLIVFDDLSKQAVAYREISLLLRRPPGREAYPGDVFYLHSRLLERSAKLNKKLGGGSMTALPFIQTQAGDISAYIPTNVISITDGQIFLEADLFFAGTRPAINAGESVSRVGGSAQIKAMKKVAGTLRVDLASYRELESFAQFGSDLDQATQAKLNRGRRTVEVLKQPLHKPLPVEDEVLILYALTHGFLDAIPVPDIQRYELELYDYFASNYNDLLDVIRTTGDLPEEDKLNEALKNFNEGFSISKK</sequence>
<evidence type="ECO:0000255" key="1">
    <source>
        <dbReference type="HAMAP-Rule" id="MF_01346"/>
    </source>
</evidence>
<protein>
    <recommendedName>
        <fullName evidence="1">ATP synthase subunit alpha</fullName>
        <ecNumber evidence="1">7.1.2.2</ecNumber>
    </recommendedName>
    <alternativeName>
        <fullName evidence="1">ATP synthase F1 sector subunit alpha</fullName>
    </alternativeName>
    <alternativeName>
        <fullName evidence="1">F-ATPase subunit alpha</fullName>
    </alternativeName>
</protein>
<feature type="chain" id="PRO_0000238266" description="ATP synthase subunit alpha">
    <location>
        <begin position="1"/>
        <end position="503"/>
    </location>
</feature>
<feature type="binding site" evidence="1">
    <location>
        <begin position="169"/>
        <end position="176"/>
    </location>
    <ligand>
        <name>ATP</name>
        <dbReference type="ChEBI" id="CHEBI:30616"/>
    </ligand>
</feature>
<feature type="site" description="Required for activity" evidence="1">
    <location>
        <position position="362"/>
    </location>
</feature>
<comment type="function">
    <text evidence="1">Produces ATP from ADP in the presence of a proton gradient across the membrane. The alpha chain is a regulatory subunit.</text>
</comment>
<comment type="catalytic activity">
    <reaction evidence="1">
        <text>ATP + H2O + 4 H(+)(in) = ADP + phosphate + 5 H(+)(out)</text>
        <dbReference type="Rhea" id="RHEA:57720"/>
        <dbReference type="ChEBI" id="CHEBI:15377"/>
        <dbReference type="ChEBI" id="CHEBI:15378"/>
        <dbReference type="ChEBI" id="CHEBI:30616"/>
        <dbReference type="ChEBI" id="CHEBI:43474"/>
        <dbReference type="ChEBI" id="CHEBI:456216"/>
        <dbReference type="EC" id="7.1.2.2"/>
    </reaction>
</comment>
<comment type="subunit">
    <text evidence="1">F-type ATPases have 2 components, CF(1) - the catalytic core - and CF(0) - the membrane proton channel. CF(1) has five subunits: alpha(3), beta(3), gamma(1), delta(1), epsilon(1). CF(0) has three main subunits: a(1), b(2) and c(9-12). The alpha and beta chains form an alternating ring which encloses part of the gamma chain. CF(1) is attached to CF(0) by a central stalk formed by the gamma and epsilon chains, while a peripheral stalk is formed by the delta and b chains.</text>
</comment>
<comment type="subcellular location">
    <subcellularLocation>
        <location evidence="1">Cell membrane</location>
        <topology evidence="1">Peripheral membrane protein</topology>
    </subcellularLocation>
</comment>
<comment type="similarity">
    <text evidence="1">Belongs to the ATPase alpha/beta chains family.</text>
</comment>
<reference key="1">
    <citation type="journal article" date="2004" name="Proc. Natl. Acad. Sci. U.S.A.">
        <title>The genome sequence of the probiotic intestinal bacterium Lactobacillus johnsonii NCC 533.</title>
        <authorList>
            <person name="Pridmore R.D."/>
            <person name="Berger B."/>
            <person name="Desiere F."/>
            <person name="Vilanova D."/>
            <person name="Barretto C."/>
            <person name="Pittet A.-C."/>
            <person name="Zwahlen M.-C."/>
            <person name="Rouvet M."/>
            <person name="Altermann E."/>
            <person name="Barrangou R."/>
            <person name="Mollet B."/>
            <person name="Mercenier A."/>
            <person name="Klaenhammer T."/>
            <person name="Arigoni F."/>
            <person name="Schell M.A."/>
        </authorList>
    </citation>
    <scope>NUCLEOTIDE SEQUENCE [LARGE SCALE GENOMIC DNA]</scope>
    <source>
        <strain>CNCM I-1225 / La1 / NCC 533</strain>
    </source>
</reference>
<keyword id="KW-0066">ATP synthesis</keyword>
<keyword id="KW-0067">ATP-binding</keyword>
<keyword id="KW-1003">Cell membrane</keyword>
<keyword id="KW-0139">CF(1)</keyword>
<keyword id="KW-0375">Hydrogen ion transport</keyword>
<keyword id="KW-0406">Ion transport</keyword>
<keyword id="KW-0472">Membrane</keyword>
<keyword id="KW-0547">Nucleotide-binding</keyword>
<keyword id="KW-1278">Translocase</keyword>
<keyword id="KW-0813">Transport</keyword>
<gene>
    <name evidence="1" type="primary">atpA</name>
    <name type="ordered locus">LJ_0938</name>
</gene>
<name>ATPA_LACJO</name>
<dbReference type="EC" id="7.1.2.2" evidence="1"/>
<dbReference type="EMBL" id="AE017198">
    <property type="protein sequence ID" value="AAS08759.1"/>
    <property type="molecule type" value="Genomic_DNA"/>
</dbReference>
<dbReference type="RefSeq" id="WP_004897610.1">
    <property type="nucleotide sequence ID" value="NC_005362.1"/>
</dbReference>
<dbReference type="SMR" id="Q74K17"/>
<dbReference type="GeneID" id="83570629"/>
<dbReference type="KEGG" id="ljo:LJ_0938"/>
<dbReference type="eggNOG" id="COG0056">
    <property type="taxonomic scope" value="Bacteria"/>
</dbReference>
<dbReference type="HOGENOM" id="CLU_010091_2_1_9"/>
<dbReference type="Proteomes" id="UP000000581">
    <property type="component" value="Chromosome"/>
</dbReference>
<dbReference type="GO" id="GO:0005886">
    <property type="term" value="C:plasma membrane"/>
    <property type="evidence" value="ECO:0007669"/>
    <property type="project" value="UniProtKB-SubCell"/>
</dbReference>
<dbReference type="GO" id="GO:0045259">
    <property type="term" value="C:proton-transporting ATP synthase complex"/>
    <property type="evidence" value="ECO:0007669"/>
    <property type="project" value="UniProtKB-KW"/>
</dbReference>
<dbReference type="GO" id="GO:0043531">
    <property type="term" value="F:ADP binding"/>
    <property type="evidence" value="ECO:0007669"/>
    <property type="project" value="TreeGrafter"/>
</dbReference>
<dbReference type="GO" id="GO:0005524">
    <property type="term" value="F:ATP binding"/>
    <property type="evidence" value="ECO:0007669"/>
    <property type="project" value="UniProtKB-UniRule"/>
</dbReference>
<dbReference type="GO" id="GO:0046933">
    <property type="term" value="F:proton-transporting ATP synthase activity, rotational mechanism"/>
    <property type="evidence" value="ECO:0007669"/>
    <property type="project" value="UniProtKB-UniRule"/>
</dbReference>
<dbReference type="CDD" id="cd18113">
    <property type="entry name" value="ATP-synt_F1_alpha_C"/>
    <property type="match status" value="1"/>
</dbReference>
<dbReference type="CDD" id="cd18116">
    <property type="entry name" value="ATP-synt_F1_alpha_N"/>
    <property type="match status" value="1"/>
</dbReference>
<dbReference type="CDD" id="cd01132">
    <property type="entry name" value="F1-ATPase_alpha_CD"/>
    <property type="match status" value="1"/>
</dbReference>
<dbReference type="FunFam" id="1.20.150.20:FF:000001">
    <property type="entry name" value="ATP synthase subunit alpha"/>
    <property type="match status" value="1"/>
</dbReference>
<dbReference type="FunFam" id="2.40.30.20:FF:000001">
    <property type="entry name" value="ATP synthase subunit alpha"/>
    <property type="match status" value="1"/>
</dbReference>
<dbReference type="FunFam" id="3.40.50.300:FF:000002">
    <property type="entry name" value="ATP synthase subunit alpha"/>
    <property type="match status" value="1"/>
</dbReference>
<dbReference type="Gene3D" id="2.40.30.20">
    <property type="match status" value="1"/>
</dbReference>
<dbReference type="Gene3D" id="1.20.150.20">
    <property type="entry name" value="ATP synthase alpha/beta chain, C-terminal domain"/>
    <property type="match status" value="1"/>
</dbReference>
<dbReference type="Gene3D" id="3.40.50.300">
    <property type="entry name" value="P-loop containing nucleotide triphosphate hydrolases"/>
    <property type="match status" value="1"/>
</dbReference>
<dbReference type="HAMAP" id="MF_01346">
    <property type="entry name" value="ATP_synth_alpha_bact"/>
    <property type="match status" value="1"/>
</dbReference>
<dbReference type="InterPro" id="IPR023366">
    <property type="entry name" value="ATP_synth_asu-like_sf"/>
</dbReference>
<dbReference type="InterPro" id="IPR000793">
    <property type="entry name" value="ATP_synth_asu_C"/>
</dbReference>
<dbReference type="InterPro" id="IPR038376">
    <property type="entry name" value="ATP_synth_asu_C_sf"/>
</dbReference>
<dbReference type="InterPro" id="IPR033732">
    <property type="entry name" value="ATP_synth_F1_a_nt-bd_dom"/>
</dbReference>
<dbReference type="InterPro" id="IPR005294">
    <property type="entry name" value="ATP_synth_F1_asu"/>
</dbReference>
<dbReference type="InterPro" id="IPR020003">
    <property type="entry name" value="ATPase_a/bsu_AS"/>
</dbReference>
<dbReference type="InterPro" id="IPR004100">
    <property type="entry name" value="ATPase_F1/V1/A1_a/bsu_N"/>
</dbReference>
<dbReference type="InterPro" id="IPR036121">
    <property type="entry name" value="ATPase_F1/V1/A1_a/bsu_N_sf"/>
</dbReference>
<dbReference type="InterPro" id="IPR000194">
    <property type="entry name" value="ATPase_F1/V1/A1_a/bsu_nucl-bd"/>
</dbReference>
<dbReference type="InterPro" id="IPR027417">
    <property type="entry name" value="P-loop_NTPase"/>
</dbReference>
<dbReference type="NCBIfam" id="TIGR00962">
    <property type="entry name" value="atpA"/>
    <property type="match status" value="1"/>
</dbReference>
<dbReference type="NCBIfam" id="NF009884">
    <property type="entry name" value="PRK13343.1"/>
    <property type="match status" value="1"/>
</dbReference>
<dbReference type="PANTHER" id="PTHR48082">
    <property type="entry name" value="ATP SYNTHASE SUBUNIT ALPHA, MITOCHONDRIAL"/>
    <property type="match status" value="1"/>
</dbReference>
<dbReference type="PANTHER" id="PTHR48082:SF2">
    <property type="entry name" value="ATP SYNTHASE SUBUNIT ALPHA, MITOCHONDRIAL"/>
    <property type="match status" value="1"/>
</dbReference>
<dbReference type="Pfam" id="PF00006">
    <property type="entry name" value="ATP-synt_ab"/>
    <property type="match status" value="1"/>
</dbReference>
<dbReference type="Pfam" id="PF00306">
    <property type="entry name" value="ATP-synt_ab_C"/>
    <property type="match status" value="1"/>
</dbReference>
<dbReference type="Pfam" id="PF02874">
    <property type="entry name" value="ATP-synt_ab_N"/>
    <property type="match status" value="1"/>
</dbReference>
<dbReference type="PIRSF" id="PIRSF039088">
    <property type="entry name" value="F_ATPase_subunit_alpha"/>
    <property type="match status" value="1"/>
</dbReference>
<dbReference type="SUPFAM" id="SSF47917">
    <property type="entry name" value="C-terminal domain of alpha and beta subunits of F1 ATP synthase"/>
    <property type="match status" value="1"/>
</dbReference>
<dbReference type="SUPFAM" id="SSF50615">
    <property type="entry name" value="N-terminal domain of alpha and beta subunits of F1 ATP synthase"/>
    <property type="match status" value="1"/>
</dbReference>
<dbReference type="SUPFAM" id="SSF52540">
    <property type="entry name" value="P-loop containing nucleoside triphosphate hydrolases"/>
    <property type="match status" value="1"/>
</dbReference>
<dbReference type="PROSITE" id="PS00152">
    <property type="entry name" value="ATPASE_ALPHA_BETA"/>
    <property type="match status" value="1"/>
</dbReference>
<proteinExistence type="inferred from homology"/>
<organism>
    <name type="scientific">Lactobacillus johnsonii (strain CNCM I-12250 / La1 / NCC 533)</name>
    <dbReference type="NCBI Taxonomy" id="257314"/>
    <lineage>
        <taxon>Bacteria</taxon>
        <taxon>Bacillati</taxon>
        <taxon>Bacillota</taxon>
        <taxon>Bacilli</taxon>
        <taxon>Lactobacillales</taxon>
        <taxon>Lactobacillaceae</taxon>
        <taxon>Lactobacillus</taxon>
    </lineage>
</organism>
<accession>Q74K17</accession>